<feature type="propeptide" id="PRO_0000031331" evidence="1">
    <location>
        <begin position="1"/>
        <end position="2"/>
    </location>
</feature>
<feature type="chain" id="PRO_0000031332" description="Ribulose bisphosphate carboxylase large chain">
    <location>
        <begin position="3"/>
        <end position="475"/>
    </location>
</feature>
<feature type="active site" description="Proton acceptor" evidence="1">
    <location>
        <position position="175"/>
    </location>
</feature>
<feature type="active site" description="Proton acceptor" evidence="1">
    <location>
        <position position="294"/>
    </location>
</feature>
<feature type="binding site" description="in homodimeric partner" evidence="1">
    <location>
        <position position="123"/>
    </location>
    <ligand>
        <name>substrate</name>
    </ligand>
</feature>
<feature type="binding site" evidence="1">
    <location>
        <position position="173"/>
    </location>
    <ligand>
        <name>substrate</name>
    </ligand>
</feature>
<feature type="binding site" evidence="1">
    <location>
        <position position="177"/>
    </location>
    <ligand>
        <name>substrate</name>
    </ligand>
</feature>
<feature type="binding site" description="via carbamate group" evidence="1">
    <location>
        <position position="201"/>
    </location>
    <ligand>
        <name>Mg(2+)</name>
        <dbReference type="ChEBI" id="CHEBI:18420"/>
    </ligand>
</feature>
<feature type="binding site" evidence="1">
    <location>
        <position position="203"/>
    </location>
    <ligand>
        <name>Mg(2+)</name>
        <dbReference type="ChEBI" id="CHEBI:18420"/>
    </ligand>
</feature>
<feature type="binding site" evidence="1">
    <location>
        <position position="204"/>
    </location>
    <ligand>
        <name>Mg(2+)</name>
        <dbReference type="ChEBI" id="CHEBI:18420"/>
    </ligand>
</feature>
<feature type="binding site" evidence="1">
    <location>
        <position position="295"/>
    </location>
    <ligand>
        <name>substrate</name>
    </ligand>
</feature>
<feature type="binding site" evidence="1">
    <location>
        <position position="327"/>
    </location>
    <ligand>
        <name>substrate</name>
    </ligand>
</feature>
<feature type="binding site" evidence="1">
    <location>
        <position position="379"/>
    </location>
    <ligand>
        <name>substrate</name>
    </ligand>
</feature>
<feature type="site" description="Transition state stabilizer" evidence="1">
    <location>
        <position position="334"/>
    </location>
</feature>
<feature type="modified residue" description="N-acetylproline" evidence="1">
    <location>
        <position position="3"/>
    </location>
</feature>
<feature type="modified residue" description="N6,N6,N6-trimethyllysine" evidence="1">
    <location>
        <position position="14"/>
    </location>
</feature>
<feature type="modified residue" description="N6-carboxylysine" evidence="1">
    <location>
        <position position="201"/>
    </location>
</feature>
<feature type="disulfide bond" description="Interchain; in linked form" evidence="1">
    <location>
        <position position="247"/>
    </location>
</feature>
<gene>
    <name evidence="1" type="primary">rbcL</name>
</gene>
<protein>
    <recommendedName>
        <fullName evidence="1">Ribulose bisphosphate carboxylase large chain</fullName>
        <shortName evidence="1">RuBisCO large subunit</shortName>
        <ecNumber evidence="1">4.1.1.39</ecNumber>
    </recommendedName>
</protein>
<keyword id="KW-0007">Acetylation</keyword>
<keyword id="KW-0113">Calvin cycle</keyword>
<keyword id="KW-0120">Carbon dioxide fixation</keyword>
<keyword id="KW-0150">Chloroplast</keyword>
<keyword id="KW-1015">Disulfide bond</keyword>
<keyword id="KW-0456">Lyase</keyword>
<keyword id="KW-0460">Magnesium</keyword>
<keyword id="KW-0479">Metal-binding</keyword>
<keyword id="KW-0488">Methylation</keyword>
<keyword id="KW-0503">Monooxygenase</keyword>
<keyword id="KW-0560">Oxidoreductase</keyword>
<keyword id="KW-0601">Photorespiration</keyword>
<keyword id="KW-0602">Photosynthesis</keyword>
<keyword id="KW-0934">Plastid</keyword>
<name>RBL_OSTVI</name>
<comment type="function">
    <text evidence="1">RuBisCO catalyzes two reactions: the carboxylation of D-ribulose 1,5-bisphosphate, the primary event in carbon dioxide fixation, as well as the oxidative fragmentation of the pentose substrate in the photorespiration process. Both reactions occur simultaneously and in competition at the same active site.</text>
</comment>
<comment type="catalytic activity">
    <reaction evidence="1">
        <text>2 (2R)-3-phosphoglycerate + 2 H(+) = D-ribulose 1,5-bisphosphate + CO2 + H2O</text>
        <dbReference type="Rhea" id="RHEA:23124"/>
        <dbReference type="ChEBI" id="CHEBI:15377"/>
        <dbReference type="ChEBI" id="CHEBI:15378"/>
        <dbReference type="ChEBI" id="CHEBI:16526"/>
        <dbReference type="ChEBI" id="CHEBI:57870"/>
        <dbReference type="ChEBI" id="CHEBI:58272"/>
        <dbReference type="EC" id="4.1.1.39"/>
    </reaction>
</comment>
<comment type="catalytic activity">
    <reaction evidence="1">
        <text>D-ribulose 1,5-bisphosphate + O2 = 2-phosphoglycolate + (2R)-3-phosphoglycerate + 2 H(+)</text>
        <dbReference type="Rhea" id="RHEA:36631"/>
        <dbReference type="ChEBI" id="CHEBI:15378"/>
        <dbReference type="ChEBI" id="CHEBI:15379"/>
        <dbReference type="ChEBI" id="CHEBI:57870"/>
        <dbReference type="ChEBI" id="CHEBI:58033"/>
        <dbReference type="ChEBI" id="CHEBI:58272"/>
    </reaction>
</comment>
<comment type="cofactor">
    <cofactor evidence="1">
        <name>Mg(2+)</name>
        <dbReference type="ChEBI" id="CHEBI:18420"/>
    </cofactor>
    <text evidence="1">Binds 1 Mg(2+) ion per subunit.</text>
</comment>
<comment type="subunit">
    <text evidence="1">Heterohexadecamer of 8 large chains and 8 small chains; disulfide-linked. The disulfide link is formed within the large subunit homodimers.</text>
</comment>
<comment type="subcellular location">
    <subcellularLocation>
        <location>Plastid</location>
        <location>Chloroplast</location>
    </subcellularLocation>
</comment>
<comment type="PTM">
    <text evidence="1">The disulfide bond which can form in the large chain dimeric partners within the hexadecamer appears to be associated with oxidative stress and protein turnover.</text>
</comment>
<comment type="miscellaneous">
    <text evidence="1">The basic functional RuBisCO is composed of a large chain homodimer in a 'head-to-tail' conformation. In form I RuBisCO this homodimer is arranged in a barrel-like tetramer with the small subunits forming a tetrameric 'cap' on each end of the 'barrel'.</text>
</comment>
<comment type="similarity">
    <text evidence="1">Belongs to the RuBisCO large chain family. Type I subfamily.</text>
</comment>
<organism>
    <name type="scientific">Ostrya virginiana</name>
    <name type="common">American hophornbeam</name>
    <name type="synonym">Carpinus virginiana</name>
    <dbReference type="NCBI Taxonomy" id="13622"/>
    <lineage>
        <taxon>Eukaryota</taxon>
        <taxon>Viridiplantae</taxon>
        <taxon>Streptophyta</taxon>
        <taxon>Embryophyta</taxon>
        <taxon>Tracheophyta</taxon>
        <taxon>Spermatophyta</taxon>
        <taxon>Magnoliopsida</taxon>
        <taxon>eudicotyledons</taxon>
        <taxon>Gunneridae</taxon>
        <taxon>Pentapetalae</taxon>
        <taxon>rosids</taxon>
        <taxon>fabids</taxon>
        <taxon>Fagales</taxon>
        <taxon>Betulaceae</taxon>
        <taxon>Ostrya</taxon>
    </lineage>
</organism>
<proteinExistence type="inferred from homology"/>
<sequence>MSPQTETKASVGFKAGVKDYKLTYHTPDYETKDTDILAAFRVTPQPGVPPEEAGAAVAAESSTGTWTTVWTDGLTSLDRYKGRCYHIEPVAGEESQFIAYVAYPLDLFEEGSVTNMFTSIVGNVFGFKALRALRLEDLRIPPAYSKTFQGPPHGIQVERDKLNKYGRPLLGCTIKPKLGLSAKNYGRAVYECLRGGLDFTKDDENVNSQPFMRWRDRFLFCAEAIYKAQAETGEIKGHYLNATAGTCEEMIKRAVFARELGVPIVMHDYLTGGFTANTSLAHYCRDNGLLLHIHRAMHAVIDRQKNHGMHFRVLAKALRMSGGDHIHAGTVVGKLEGEREITLGFVDLLRDDYIEKDRSRGIYFTQDWVSLPGVLPVASGGIHVWHMPALTEIFGDDSVLQFGGGTLGHPWGNAPGAVANRVALEACVQARNEGRDLACEGNEIIRAAAKWSPELAAACEVWKEIKFEFPAMDTL</sequence>
<reference key="1">
    <citation type="journal article" date="1992" name="Mol. Biol. Evol.">
        <title>Complete congruence between morphological and rbcL-based molecular phylogenies in birches and related species (Betulaceae).</title>
        <authorList>
            <person name="Bousquet J."/>
            <person name="Strauss S.H."/>
            <person name="Li P."/>
        </authorList>
    </citation>
    <scope>NUCLEOTIDE SEQUENCE [GENOMIC DNA]</scope>
    <source>
        <tissue>Leaf</tissue>
    </source>
</reference>
<evidence type="ECO:0000255" key="1">
    <source>
        <dbReference type="HAMAP-Rule" id="MF_01338"/>
    </source>
</evidence>
<dbReference type="EC" id="4.1.1.39" evidence="1"/>
<dbReference type="EMBL" id="X56620">
    <property type="protein sequence ID" value="CAA39958.1"/>
    <property type="molecule type" value="Genomic_DNA"/>
</dbReference>
<dbReference type="SMR" id="Q06025"/>
<dbReference type="GO" id="GO:0009507">
    <property type="term" value="C:chloroplast"/>
    <property type="evidence" value="ECO:0007669"/>
    <property type="project" value="UniProtKB-SubCell"/>
</dbReference>
<dbReference type="GO" id="GO:0000287">
    <property type="term" value="F:magnesium ion binding"/>
    <property type="evidence" value="ECO:0007669"/>
    <property type="project" value="UniProtKB-UniRule"/>
</dbReference>
<dbReference type="GO" id="GO:0004497">
    <property type="term" value="F:monooxygenase activity"/>
    <property type="evidence" value="ECO:0007669"/>
    <property type="project" value="UniProtKB-KW"/>
</dbReference>
<dbReference type="GO" id="GO:0016984">
    <property type="term" value="F:ribulose-bisphosphate carboxylase activity"/>
    <property type="evidence" value="ECO:0007669"/>
    <property type="project" value="UniProtKB-UniRule"/>
</dbReference>
<dbReference type="GO" id="GO:0009853">
    <property type="term" value="P:photorespiration"/>
    <property type="evidence" value="ECO:0007669"/>
    <property type="project" value="UniProtKB-KW"/>
</dbReference>
<dbReference type="GO" id="GO:0019253">
    <property type="term" value="P:reductive pentose-phosphate cycle"/>
    <property type="evidence" value="ECO:0007669"/>
    <property type="project" value="UniProtKB-UniRule"/>
</dbReference>
<dbReference type="CDD" id="cd08212">
    <property type="entry name" value="RuBisCO_large_I"/>
    <property type="match status" value="1"/>
</dbReference>
<dbReference type="FunFam" id="3.20.20.110:FF:000001">
    <property type="entry name" value="Ribulose bisphosphate carboxylase large chain"/>
    <property type="match status" value="1"/>
</dbReference>
<dbReference type="FunFam" id="3.30.70.150:FF:000001">
    <property type="entry name" value="Ribulose bisphosphate carboxylase large chain"/>
    <property type="match status" value="1"/>
</dbReference>
<dbReference type="Gene3D" id="3.20.20.110">
    <property type="entry name" value="Ribulose bisphosphate carboxylase, large subunit, C-terminal domain"/>
    <property type="match status" value="1"/>
</dbReference>
<dbReference type="Gene3D" id="3.30.70.150">
    <property type="entry name" value="RuBisCO large subunit, N-terminal domain"/>
    <property type="match status" value="1"/>
</dbReference>
<dbReference type="HAMAP" id="MF_01338">
    <property type="entry name" value="RuBisCO_L_type1"/>
    <property type="match status" value="1"/>
</dbReference>
<dbReference type="InterPro" id="IPR033966">
    <property type="entry name" value="RuBisCO"/>
</dbReference>
<dbReference type="InterPro" id="IPR020878">
    <property type="entry name" value="RuBisCo_large_chain_AS"/>
</dbReference>
<dbReference type="InterPro" id="IPR000685">
    <property type="entry name" value="RuBisCO_lsu_C"/>
</dbReference>
<dbReference type="InterPro" id="IPR036376">
    <property type="entry name" value="RuBisCO_lsu_C_sf"/>
</dbReference>
<dbReference type="InterPro" id="IPR017443">
    <property type="entry name" value="RuBisCO_lsu_fd_N"/>
</dbReference>
<dbReference type="InterPro" id="IPR036422">
    <property type="entry name" value="RuBisCO_lsu_N_sf"/>
</dbReference>
<dbReference type="InterPro" id="IPR020888">
    <property type="entry name" value="RuBisCO_lsuI"/>
</dbReference>
<dbReference type="NCBIfam" id="NF003252">
    <property type="entry name" value="PRK04208.1"/>
    <property type="match status" value="1"/>
</dbReference>
<dbReference type="PANTHER" id="PTHR42704">
    <property type="entry name" value="RIBULOSE BISPHOSPHATE CARBOXYLASE"/>
    <property type="match status" value="1"/>
</dbReference>
<dbReference type="PANTHER" id="PTHR42704:SF15">
    <property type="entry name" value="RIBULOSE BISPHOSPHATE CARBOXYLASE LARGE CHAIN"/>
    <property type="match status" value="1"/>
</dbReference>
<dbReference type="Pfam" id="PF00016">
    <property type="entry name" value="RuBisCO_large"/>
    <property type="match status" value="1"/>
</dbReference>
<dbReference type="Pfam" id="PF02788">
    <property type="entry name" value="RuBisCO_large_N"/>
    <property type="match status" value="1"/>
</dbReference>
<dbReference type="SFLD" id="SFLDG01052">
    <property type="entry name" value="RuBisCO"/>
    <property type="match status" value="1"/>
</dbReference>
<dbReference type="SFLD" id="SFLDS00014">
    <property type="entry name" value="RuBisCO"/>
    <property type="match status" value="1"/>
</dbReference>
<dbReference type="SFLD" id="SFLDG00301">
    <property type="entry name" value="RuBisCO-like_proteins"/>
    <property type="match status" value="1"/>
</dbReference>
<dbReference type="SUPFAM" id="SSF51649">
    <property type="entry name" value="RuBisCo, C-terminal domain"/>
    <property type="match status" value="1"/>
</dbReference>
<dbReference type="SUPFAM" id="SSF54966">
    <property type="entry name" value="RuBisCO, large subunit, small (N-terminal) domain"/>
    <property type="match status" value="1"/>
</dbReference>
<dbReference type="PROSITE" id="PS00157">
    <property type="entry name" value="RUBISCO_LARGE"/>
    <property type="match status" value="1"/>
</dbReference>
<geneLocation type="chloroplast"/>
<accession>Q06025</accession>